<gene>
    <name evidence="1" type="primary">rsmJ</name>
    <name type="ordered locus">PFL_1155</name>
</gene>
<keyword id="KW-0963">Cytoplasm</keyword>
<keyword id="KW-0489">Methyltransferase</keyword>
<keyword id="KW-0698">rRNA processing</keyword>
<keyword id="KW-0949">S-adenosyl-L-methionine</keyword>
<keyword id="KW-0808">Transferase</keyword>
<name>RSMJ_PSEF5</name>
<comment type="function">
    <text evidence="1">Specifically methylates the guanosine in position 1516 of 16S rRNA.</text>
</comment>
<comment type="catalytic activity">
    <reaction evidence="1">
        <text>guanosine(1516) in 16S rRNA + S-adenosyl-L-methionine = N(2)-methylguanosine(1516) in 16S rRNA + S-adenosyl-L-homocysteine + H(+)</text>
        <dbReference type="Rhea" id="RHEA:43220"/>
        <dbReference type="Rhea" id="RHEA-COMP:10412"/>
        <dbReference type="Rhea" id="RHEA-COMP:10413"/>
        <dbReference type="ChEBI" id="CHEBI:15378"/>
        <dbReference type="ChEBI" id="CHEBI:57856"/>
        <dbReference type="ChEBI" id="CHEBI:59789"/>
        <dbReference type="ChEBI" id="CHEBI:74269"/>
        <dbReference type="ChEBI" id="CHEBI:74481"/>
        <dbReference type="EC" id="2.1.1.242"/>
    </reaction>
</comment>
<comment type="subcellular location">
    <subcellularLocation>
        <location evidence="1">Cytoplasm</location>
    </subcellularLocation>
</comment>
<comment type="similarity">
    <text evidence="1">Belongs to the methyltransferase superfamily. RsmJ family.</text>
</comment>
<dbReference type="EC" id="2.1.1.242" evidence="1"/>
<dbReference type="EMBL" id="CP000076">
    <property type="protein sequence ID" value="AAY90442.1"/>
    <property type="molecule type" value="Genomic_DNA"/>
</dbReference>
<dbReference type="RefSeq" id="WP_011059503.1">
    <property type="nucleotide sequence ID" value="NC_004129.6"/>
</dbReference>
<dbReference type="SMR" id="Q4KHJ7"/>
<dbReference type="STRING" id="220664.PFL_1155"/>
<dbReference type="KEGG" id="pfl:PFL_1155"/>
<dbReference type="PATRIC" id="fig|220664.5.peg.1186"/>
<dbReference type="eggNOG" id="COG0742">
    <property type="taxonomic scope" value="Bacteria"/>
</dbReference>
<dbReference type="HOGENOM" id="CLU_076324_0_1_6"/>
<dbReference type="Proteomes" id="UP000008540">
    <property type="component" value="Chromosome"/>
</dbReference>
<dbReference type="GO" id="GO:0005737">
    <property type="term" value="C:cytoplasm"/>
    <property type="evidence" value="ECO:0007669"/>
    <property type="project" value="UniProtKB-SubCell"/>
</dbReference>
<dbReference type="GO" id="GO:0008990">
    <property type="term" value="F:rRNA (guanine-N2-)-methyltransferase activity"/>
    <property type="evidence" value="ECO:0007669"/>
    <property type="project" value="UniProtKB-UniRule"/>
</dbReference>
<dbReference type="Gene3D" id="3.40.50.150">
    <property type="entry name" value="Vaccinia Virus protein VP39"/>
    <property type="match status" value="1"/>
</dbReference>
<dbReference type="HAMAP" id="MF_01523">
    <property type="entry name" value="16SrRNA_methyltr_J"/>
    <property type="match status" value="1"/>
</dbReference>
<dbReference type="InterPro" id="IPR007536">
    <property type="entry name" value="16SrRNA_methylTrfase_J"/>
</dbReference>
<dbReference type="InterPro" id="IPR029063">
    <property type="entry name" value="SAM-dependent_MTases_sf"/>
</dbReference>
<dbReference type="PANTHER" id="PTHR36112">
    <property type="entry name" value="RIBOSOMAL RNA SMALL SUBUNIT METHYLTRANSFERASE J"/>
    <property type="match status" value="1"/>
</dbReference>
<dbReference type="PANTHER" id="PTHR36112:SF1">
    <property type="entry name" value="RIBOSOMAL RNA SMALL SUBUNIT METHYLTRANSFERASE J"/>
    <property type="match status" value="1"/>
</dbReference>
<dbReference type="Pfam" id="PF04445">
    <property type="entry name" value="SAM_MT"/>
    <property type="match status" value="1"/>
</dbReference>
<dbReference type="SUPFAM" id="SSF53335">
    <property type="entry name" value="S-adenosyl-L-methionine-dependent methyltransferases"/>
    <property type="match status" value="1"/>
</dbReference>
<reference key="1">
    <citation type="journal article" date="2005" name="Nat. Biotechnol.">
        <title>Complete genome sequence of the plant commensal Pseudomonas fluorescens Pf-5.</title>
        <authorList>
            <person name="Paulsen I.T."/>
            <person name="Press C.M."/>
            <person name="Ravel J."/>
            <person name="Kobayashi D.Y."/>
            <person name="Myers G.S.A."/>
            <person name="Mavrodi D.V."/>
            <person name="DeBoy R.T."/>
            <person name="Seshadri R."/>
            <person name="Ren Q."/>
            <person name="Madupu R."/>
            <person name="Dodson R.J."/>
            <person name="Durkin A.S."/>
            <person name="Brinkac L.M."/>
            <person name="Daugherty S.C."/>
            <person name="Sullivan S.A."/>
            <person name="Rosovitz M.J."/>
            <person name="Gwinn M.L."/>
            <person name="Zhou L."/>
            <person name="Schneider D.J."/>
            <person name="Cartinhour S.W."/>
            <person name="Nelson W.C."/>
            <person name="Weidman J."/>
            <person name="Watkins K."/>
            <person name="Tran K."/>
            <person name="Khouri H."/>
            <person name="Pierson E.A."/>
            <person name="Pierson L.S. III"/>
            <person name="Thomashow L.S."/>
            <person name="Loper J.E."/>
        </authorList>
    </citation>
    <scope>NUCLEOTIDE SEQUENCE [LARGE SCALE GENOMIC DNA]</scope>
    <source>
        <strain>ATCC BAA-477 / NRRL B-23932 / Pf-5</strain>
    </source>
</reference>
<proteinExistence type="inferred from homology"/>
<accession>Q4KHJ7</accession>
<feature type="chain" id="PRO_0000212084" description="Ribosomal RNA small subunit methyltransferase J">
    <location>
        <begin position="1"/>
        <end position="260"/>
    </location>
</feature>
<feature type="binding site" evidence="1">
    <location>
        <begin position="125"/>
        <end position="126"/>
    </location>
    <ligand>
        <name>S-adenosyl-L-methionine</name>
        <dbReference type="ChEBI" id="CHEBI:59789"/>
    </ligand>
</feature>
<feature type="binding site" evidence="1">
    <location>
        <position position="179"/>
    </location>
    <ligand>
        <name>S-adenosyl-L-methionine</name>
        <dbReference type="ChEBI" id="CHEBI:59789"/>
    </ligand>
</feature>
<evidence type="ECO:0000255" key="1">
    <source>
        <dbReference type="HAMAP-Rule" id="MF_01523"/>
    </source>
</evidence>
<protein>
    <recommendedName>
        <fullName evidence="1">Ribosomal RNA small subunit methyltransferase J</fullName>
        <ecNumber evidence="1">2.1.1.242</ecNumber>
    </recommendedName>
    <alternativeName>
        <fullName evidence="1">16S rRNA m2G1516 methyltransferase</fullName>
    </alternativeName>
    <alternativeName>
        <fullName evidence="1">rRNA (guanine-N(2)-)-methyltransferase</fullName>
    </alternativeName>
</protein>
<sequence length="260" mass="27782">MNEQPAACRIKVEALGAGFAPAAEQWAERLGLALQVDEAEFALQVGEQGLQLQQLGPDAPGPVRVDFVEGGAAHRRLYGGGSGQMIAKAVGVAQGVRPRVLDATAGLGKDGFVLATLGCEMSLIERQPLIGALLEDGLARAAQDAEVGPIVARMHLLKGNSIELMRNWQGEPPQVIYLDPMFPHREKSALVKKEMRLFRPLVGDDNDAPALLAAALALASHRVVVKRPRKAPCIEGPKPSHGLEGKSSRYDIYPKKALKA</sequence>
<organism>
    <name type="scientific">Pseudomonas fluorescens (strain ATCC BAA-477 / NRRL B-23932 / Pf-5)</name>
    <dbReference type="NCBI Taxonomy" id="220664"/>
    <lineage>
        <taxon>Bacteria</taxon>
        <taxon>Pseudomonadati</taxon>
        <taxon>Pseudomonadota</taxon>
        <taxon>Gammaproteobacteria</taxon>
        <taxon>Pseudomonadales</taxon>
        <taxon>Pseudomonadaceae</taxon>
        <taxon>Pseudomonas</taxon>
    </lineage>
</organism>